<comment type="function">
    <text evidence="1">Component of the Mediator complex, a coactivator involved in the regulated transcription of nearly all RNA polymerase II-dependent genes. Mediator functions as a bridge to convey information from gene-specific regulatory proteins to the basal RNA polymerase II transcription machinery. The Mediator complex, having a compact conformation in its free form, is recruited to promoters by direct interactions with regulatory proteins and serves for the assembly of a functional preinitiation complex with RNA polymerase II and the general transcription factors (By similarity). May play a role in transcription elongation (By similarity).</text>
</comment>
<comment type="subunit">
    <text evidence="5">Component of the Mediator complex.</text>
</comment>
<comment type="subcellular location">
    <subcellularLocation>
        <location evidence="5">Nucleus</location>
    </subcellularLocation>
</comment>
<comment type="alternative products">
    <event type="alternative splicing"/>
    <isoform>
        <id>F4J4Y5-1</id>
        <name>1</name>
        <sequence type="displayed"/>
    </isoform>
    <isoform>
        <id>F4J4Y5-2</id>
        <name>2</name>
        <sequence type="described" ref="VSP_044034 VSP_044035"/>
    </isoform>
</comment>
<comment type="similarity">
    <text evidence="5">Belongs to the Mediator complex subunit 26 family.</text>
</comment>
<comment type="sequence caution" evidence="5">
    <conflict type="erroneous gene model prediction">
        <sequence resource="EMBL-CDS" id="AAF19567"/>
    </conflict>
</comment>
<reference key="1">
    <citation type="journal article" date="2000" name="Nature">
        <title>Sequence and analysis of chromosome 3 of the plant Arabidopsis thaliana.</title>
        <authorList>
            <person name="Salanoubat M."/>
            <person name="Lemcke K."/>
            <person name="Rieger M."/>
            <person name="Ansorge W."/>
            <person name="Unseld M."/>
            <person name="Fartmann B."/>
            <person name="Valle G."/>
            <person name="Bloecker H."/>
            <person name="Perez-Alonso M."/>
            <person name="Obermaier B."/>
            <person name="Delseny M."/>
            <person name="Boutry M."/>
            <person name="Grivell L.A."/>
            <person name="Mache R."/>
            <person name="Puigdomenech P."/>
            <person name="De Simone V."/>
            <person name="Choisne N."/>
            <person name="Artiguenave F."/>
            <person name="Robert C."/>
            <person name="Brottier P."/>
            <person name="Wincker P."/>
            <person name="Cattolico L."/>
            <person name="Weissenbach J."/>
            <person name="Saurin W."/>
            <person name="Quetier F."/>
            <person name="Schaefer M."/>
            <person name="Mueller-Auer S."/>
            <person name="Gabel C."/>
            <person name="Fuchs M."/>
            <person name="Benes V."/>
            <person name="Wurmbach E."/>
            <person name="Drzonek H."/>
            <person name="Erfle H."/>
            <person name="Jordan N."/>
            <person name="Bangert S."/>
            <person name="Wiedelmann R."/>
            <person name="Kranz H."/>
            <person name="Voss H."/>
            <person name="Holland R."/>
            <person name="Brandt P."/>
            <person name="Nyakatura G."/>
            <person name="Vezzi A."/>
            <person name="D'Angelo M."/>
            <person name="Pallavicini A."/>
            <person name="Toppo S."/>
            <person name="Simionati B."/>
            <person name="Conrad A."/>
            <person name="Hornischer K."/>
            <person name="Kauer G."/>
            <person name="Loehnert T.-H."/>
            <person name="Nordsiek G."/>
            <person name="Reichelt J."/>
            <person name="Scharfe M."/>
            <person name="Schoen O."/>
            <person name="Bargues M."/>
            <person name="Terol J."/>
            <person name="Climent J."/>
            <person name="Navarro P."/>
            <person name="Collado C."/>
            <person name="Perez-Perez A."/>
            <person name="Ottenwaelder B."/>
            <person name="Duchemin D."/>
            <person name="Cooke R."/>
            <person name="Laudie M."/>
            <person name="Berger-Llauro C."/>
            <person name="Purnelle B."/>
            <person name="Masuy D."/>
            <person name="de Haan M."/>
            <person name="Maarse A.C."/>
            <person name="Alcaraz J.-P."/>
            <person name="Cottet A."/>
            <person name="Casacuberta E."/>
            <person name="Monfort A."/>
            <person name="Argiriou A."/>
            <person name="Flores M."/>
            <person name="Liguori R."/>
            <person name="Vitale D."/>
            <person name="Mannhaupt G."/>
            <person name="Haase D."/>
            <person name="Schoof H."/>
            <person name="Rudd S."/>
            <person name="Zaccaria P."/>
            <person name="Mewes H.-W."/>
            <person name="Mayer K.F.X."/>
            <person name="Kaul S."/>
            <person name="Town C.D."/>
            <person name="Koo H.L."/>
            <person name="Tallon L.J."/>
            <person name="Jenkins J."/>
            <person name="Rooney T."/>
            <person name="Rizzo M."/>
            <person name="Walts A."/>
            <person name="Utterback T."/>
            <person name="Fujii C.Y."/>
            <person name="Shea T.P."/>
            <person name="Creasy T.H."/>
            <person name="Haas B."/>
            <person name="Maiti R."/>
            <person name="Wu D."/>
            <person name="Peterson J."/>
            <person name="Van Aken S."/>
            <person name="Pai G."/>
            <person name="Militscher J."/>
            <person name="Sellers P."/>
            <person name="Gill J.E."/>
            <person name="Feldblyum T.V."/>
            <person name="Preuss D."/>
            <person name="Lin X."/>
            <person name="Nierman W.C."/>
            <person name="Salzberg S.L."/>
            <person name="White O."/>
            <person name="Venter J.C."/>
            <person name="Fraser C.M."/>
            <person name="Kaneko T."/>
            <person name="Nakamura Y."/>
            <person name="Sato S."/>
            <person name="Kato T."/>
            <person name="Asamizu E."/>
            <person name="Sasamoto S."/>
            <person name="Kimura T."/>
            <person name="Idesawa K."/>
            <person name="Kawashima K."/>
            <person name="Kishida Y."/>
            <person name="Kiyokawa C."/>
            <person name="Kohara M."/>
            <person name="Matsumoto M."/>
            <person name="Matsuno A."/>
            <person name="Muraki A."/>
            <person name="Nakayama S."/>
            <person name="Nakazaki N."/>
            <person name="Shinpo S."/>
            <person name="Takeuchi C."/>
            <person name="Wada T."/>
            <person name="Watanabe A."/>
            <person name="Yamada M."/>
            <person name="Yasuda M."/>
            <person name="Tabata S."/>
        </authorList>
    </citation>
    <scope>NUCLEOTIDE SEQUENCE [LARGE SCALE GENOMIC DNA]</scope>
    <source>
        <strain>cv. Columbia</strain>
    </source>
</reference>
<reference key="2">
    <citation type="journal article" date="2017" name="Plant J.">
        <title>Araport11: a complete reannotation of the Arabidopsis thaliana reference genome.</title>
        <authorList>
            <person name="Cheng C.Y."/>
            <person name="Krishnakumar V."/>
            <person name="Chan A.P."/>
            <person name="Thibaud-Nissen F."/>
            <person name="Schobel S."/>
            <person name="Town C.D."/>
        </authorList>
    </citation>
    <scope>GENOME REANNOTATION</scope>
    <source>
        <strain>cv. Columbia</strain>
    </source>
</reference>
<reference key="3">
    <citation type="journal article" date="2011" name="Plant Physiol.">
        <title>The Mediator complex in plants: structure, phylogeny, and expression profiling of representative genes in a dicot (Arabidopsis) and a monocot (rice) during reproduction and abiotic stress.</title>
        <authorList>
            <person name="Mathur S."/>
            <person name="Vyas S."/>
            <person name="Kapoor S."/>
            <person name="Tyagi A.K."/>
        </authorList>
    </citation>
    <scope>IDENTIFICATION</scope>
    <scope>NOMENCLATURE</scope>
</reference>
<keyword id="KW-0025">Alternative splicing</keyword>
<keyword id="KW-0175">Coiled coil</keyword>
<keyword id="KW-0251">Elongation factor</keyword>
<keyword id="KW-0539">Nucleus</keyword>
<keyword id="KW-0648">Protein biosynthesis</keyword>
<keyword id="KW-1185">Reference proteome</keyword>
<keyword id="KW-0804">Transcription</keyword>
<keyword id="KW-0805">Transcription regulation</keyword>
<feature type="chain" id="PRO_0000418353" description="Probable mediator of RNA polymerase II transcription subunit 26a">
    <location>
        <begin position="1"/>
        <end position="580"/>
    </location>
</feature>
<feature type="domain" description="TFIIS N-terminal" evidence="3">
    <location>
        <begin position="108"/>
        <end position="183"/>
    </location>
</feature>
<feature type="region of interest" description="Disordered" evidence="4">
    <location>
        <begin position="244"/>
        <end position="337"/>
    </location>
</feature>
<feature type="coiled-coil region" evidence="2">
    <location>
        <begin position="347"/>
        <end position="368"/>
    </location>
</feature>
<feature type="compositionally biased region" description="Basic and acidic residues" evidence="4">
    <location>
        <begin position="244"/>
        <end position="255"/>
    </location>
</feature>
<feature type="compositionally biased region" description="Basic and acidic residues" evidence="4">
    <location>
        <begin position="280"/>
        <end position="290"/>
    </location>
</feature>
<feature type="compositionally biased region" description="Basic and acidic residues" evidence="4">
    <location>
        <begin position="299"/>
        <end position="309"/>
    </location>
</feature>
<feature type="splice variant" id="VSP_044034" description="In isoform 2." evidence="5">
    <original>ILDCLDCDGNPRHSVESKHERKSQSSAGRRPKGTNDANVVGRYCNDQQTRREEADV</original>
    <variation>IVWTAMEILVTVWSPNMKENRKVVRGGDPREQMMQMWLGGTAMINRRGEKKLMLDL</variation>
    <location>
        <begin position="233"/>
        <end position="288"/>
    </location>
</feature>
<feature type="splice variant" id="VSP_044035" description="In isoform 2." evidence="5">
    <location>
        <begin position="289"/>
        <end position="580"/>
    </location>
</feature>
<gene>
    <name type="primary">MED26A</name>
    <name type="synonym">MED26_1</name>
    <name type="ordered locus">At3g10820</name>
    <name type="ORF">T7M13.10</name>
</gene>
<proteinExistence type="inferred from homology"/>
<accession>F4J4Y5</accession>
<accession>F4J4Y6</accession>
<accession>Q9SG88</accession>
<organism>
    <name type="scientific">Arabidopsis thaliana</name>
    <name type="common">Mouse-ear cress</name>
    <dbReference type="NCBI Taxonomy" id="3702"/>
    <lineage>
        <taxon>Eukaryota</taxon>
        <taxon>Viridiplantae</taxon>
        <taxon>Streptophyta</taxon>
        <taxon>Embryophyta</taxon>
        <taxon>Tracheophyta</taxon>
        <taxon>Spermatophyta</taxon>
        <taxon>Magnoliopsida</taxon>
        <taxon>eudicotyledons</taxon>
        <taxon>Gunneridae</taxon>
        <taxon>Pentapetalae</taxon>
        <taxon>rosids</taxon>
        <taxon>malvids</taxon>
        <taxon>Brassicales</taxon>
        <taxon>Brassicaceae</taxon>
        <taxon>Camelineae</taxon>
        <taxon>Arabidopsis</taxon>
    </lineage>
</organism>
<name>MD26A_ARATH</name>
<evidence type="ECO:0000250" key="1"/>
<evidence type="ECO:0000255" key="2"/>
<evidence type="ECO:0000255" key="3">
    <source>
        <dbReference type="PROSITE-ProRule" id="PRU00649"/>
    </source>
</evidence>
<evidence type="ECO:0000256" key="4">
    <source>
        <dbReference type="SAM" id="MobiDB-lite"/>
    </source>
</evidence>
<evidence type="ECO:0000305" key="5"/>
<sequence length="580" mass="65872">MAKMRPSVSLDTWREYFRRGDSDIFGIIDHAIMVAAADWPKEFKSRSDRIAELLFSCKVSRCIGCDHLELSIAGDEAAVEIVGVGGGGDRGDSGVATGEGEEASVSVDEVMRIRDILSNKDDEKDSVLLESLRKLESMSMSVDILKDTEIGKAVNGLRRHSSDKISKLAKTLFAEWKRLVDQWMNTPEEMAGTEGTPESLNLSVIDEEEAFPSPPHDLDIYAPEPNGFELSQILDCLDCDGNPRHSVESKHERKSQSSAGRRPKGTNDANVVGRYCNDQQTRREEADVRPMKHSATDVVEPKRQTKQSREQMVSAIQRKPTAVTEQKRKLAGPQQDKLKALDPDSKFEFAKRKLQESYHQHENAKRQRTIQVLETIPKQNKVQKPQLKRPATRRYIYWYFWSSEFPGYELPSLILNLANPRDSSSQFSRHDELMIDIPVYFGLVLVQIDKAEMVDEMMIFKKMSVLLTEKDFVDAIVSVSLKDLTRSLFVRFEAKACPKFDLIHKTSVETVRCVGKTFMHMLSKVSREFPPRNRTHPGGLLYQRFDPTHLSLARQQVAICKETDSQYPHEIVIHWTSASA</sequence>
<protein>
    <recommendedName>
        <fullName>Probable mediator of RNA polymerase II transcription subunit 26a</fullName>
    </recommendedName>
</protein>
<dbReference type="EMBL" id="AC011708">
    <property type="protein sequence ID" value="AAF19567.1"/>
    <property type="status" value="ALT_SEQ"/>
    <property type="molecule type" value="Genomic_DNA"/>
</dbReference>
<dbReference type="EMBL" id="CP002686">
    <property type="protein sequence ID" value="AEE74960.1"/>
    <property type="molecule type" value="Genomic_DNA"/>
</dbReference>
<dbReference type="RefSeq" id="NP_001189856.1">
    <molecule id="F4J4Y5-1"/>
    <property type="nucleotide sequence ID" value="NM_001202927.1"/>
</dbReference>
<dbReference type="FunCoup" id="F4J4Y5">
    <property type="interactions" value="939"/>
</dbReference>
<dbReference type="iPTMnet" id="F4J4Y5"/>
<dbReference type="PaxDb" id="3702-AT3G10820.2"/>
<dbReference type="EnsemblPlants" id="AT3G10820.2">
    <molecule id="F4J4Y5-1"/>
    <property type="protein sequence ID" value="AT3G10820.2"/>
    <property type="gene ID" value="AT3G10820"/>
</dbReference>
<dbReference type="GeneID" id="820251"/>
<dbReference type="Gramene" id="AT3G10820.2">
    <molecule id="F4J4Y5-1"/>
    <property type="protein sequence ID" value="AT3G10820.2"/>
    <property type="gene ID" value="AT3G10820"/>
</dbReference>
<dbReference type="KEGG" id="ath:AT3G10820"/>
<dbReference type="Araport" id="AT3G10820"/>
<dbReference type="TAIR" id="AT3G10820"/>
<dbReference type="eggNOG" id="ENOG502QR7F">
    <property type="taxonomic scope" value="Eukaryota"/>
</dbReference>
<dbReference type="HOGENOM" id="CLU_024836_0_0_1"/>
<dbReference type="InParanoid" id="F4J4Y5"/>
<dbReference type="PRO" id="PR:F4J4Y5"/>
<dbReference type="Proteomes" id="UP000006548">
    <property type="component" value="Chromosome 3"/>
</dbReference>
<dbReference type="ExpressionAtlas" id="F4J4Y5">
    <property type="expression patterns" value="baseline and differential"/>
</dbReference>
<dbReference type="GO" id="GO:0005634">
    <property type="term" value="C:nucleus"/>
    <property type="evidence" value="ECO:0007669"/>
    <property type="project" value="UniProtKB-SubCell"/>
</dbReference>
<dbReference type="GO" id="GO:0003746">
    <property type="term" value="F:translation elongation factor activity"/>
    <property type="evidence" value="ECO:0007669"/>
    <property type="project" value="UniProtKB-KW"/>
</dbReference>
<dbReference type="CDD" id="cd00183">
    <property type="entry name" value="TFIIS_I"/>
    <property type="match status" value="1"/>
</dbReference>
<dbReference type="Gene3D" id="1.20.930.10">
    <property type="entry name" value="Conserved domain common to transcription factors TFIIS, elongin A, CRSP70"/>
    <property type="match status" value="1"/>
</dbReference>
<dbReference type="InterPro" id="IPR003617">
    <property type="entry name" value="TFIIS/CRSP70_N_sub"/>
</dbReference>
<dbReference type="InterPro" id="IPR035441">
    <property type="entry name" value="TFIIS/LEDGF_dom_sf"/>
</dbReference>
<dbReference type="InterPro" id="IPR017923">
    <property type="entry name" value="TFIIS_N"/>
</dbReference>
<dbReference type="PANTHER" id="PTHR46554">
    <property type="entry name" value="MEDIATOR OF RNA POLYMERASE II TRANSCRIPTION SUBUNIT 26A-RELATED"/>
    <property type="match status" value="1"/>
</dbReference>
<dbReference type="PANTHER" id="PTHR46554:SF2">
    <property type="entry name" value="TFIIS N-TERMINAL DOMAIN-CONTAINING PROTEIN"/>
    <property type="match status" value="1"/>
</dbReference>
<dbReference type="Pfam" id="PF08711">
    <property type="entry name" value="Med26"/>
    <property type="match status" value="1"/>
</dbReference>
<dbReference type="SMART" id="SM00509">
    <property type="entry name" value="TFS2N"/>
    <property type="match status" value="1"/>
</dbReference>
<dbReference type="SUPFAM" id="SSF47676">
    <property type="entry name" value="Conserved domain common to transcription factors TFIIS, elongin A, CRSP70"/>
    <property type="match status" value="1"/>
</dbReference>
<dbReference type="PROSITE" id="PS51319">
    <property type="entry name" value="TFIIS_N"/>
    <property type="match status" value="1"/>
</dbReference>